<name>RNZ_SACI2</name>
<proteinExistence type="inferred from homology"/>
<feature type="chain" id="PRO_1000216016" description="Ribonuclease Z">
    <location>
        <begin position="1"/>
        <end position="291"/>
    </location>
</feature>
<feature type="active site" description="Proton acceptor" evidence="1">
    <location>
        <position position="65"/>
    </location>
</feature>
<feature type="binding site" evidence="1">
    <location>
        <position position="61"/>
    </location>
    <ligand>
        <name>Zn(2+)</name>
        <dbReference type="ChEBI" id="CHEBI:29105"/>
        <label>1</label>
        <note>catalytic</note>
    </ligand>
</feature>
<feature type="binding site" evidence="1">
    <location>
        <position position="63"/>
    </location>
    <ligand>
        <name>Zn(2+)</name>
        <dbReference type="ChEBI" id="CHEBI:29105"/>
        <label>1</label>
        <note>catalytic</note>
    </ligand>
</feature>
<feature type="binding site" evidence="1">
    <location>
        <position position="65"/>
    </location>
    <ligand>
        <name>Zn(2+)</name>
        <dbReference type="ChEBI" id="CHEBI:29105"/>
        <label>2</label>
        <note>catalytic</note>
    </ligand>
</feature>
<feature type="binding site" evidence="1">
    <location>
        <position position="66"/>
    </location>
    <ligand>
        <name>Zn(2+)</name>
        <dbReference type="ChEBI" id="CHEBI:29105"/>
        <label>2</label>
        <note>catalytic</note>
    </ligand>
</feature>
<feature type="binding site" evidence="1">
    <location>
        <position position="133"/>
    </location>
    <ligand>
        <name>Zn(2+)</name>
        <dbReference type="ChEBI" id="CHEBI:29105"/>
        <label>1</label>
        <note>catalytic</note>
    </ligand>
</feature>
<feature type="binding site" evidence="1">
    <location>
        <position position="201"/>
    </location>
    <ligand>
        <name>Zn(2+)</name>
        <dbReference type="ChEBI" id="CHEBI:29105"/>
        <label>1</label>
        <note>catalytic</note>
    </ligand>
</feature>
<feature type="binding site" evidence="1">
    <location>
        <position position="201"/>
    </location>
    <ligand>
        <name>Zn(2+)</name>
        <dbReference type="ChEBI" id="CHEBI:29105"/>
        <label>2</label>
        <note>catalytic</note>
    </ligand>
</feature>
<feature type="binding site" evidence="1">
    <location>
        <position position="257"/>
    </location>
    <ligand>
        <name>Zn(2+)</name>
        <dbReference type="ChEBI" id="CHEBI:29105"/>
        <label>2</label>
        <note>catalytic</note>
    </ligand>
</feature>
<sequence>MIQIFFLGTGAGSPSKKRKLPAFLVRREGLNILLDCGEGTQYTLMNNKLGINSIKIIGITHMHGDHVFGLLGVIASMGLLDRKETLYILGPRDLKDFLYTSFEYSKFNPSFKIEFIDNYNDQNITIATFKTCHTVESQGYLISERDRVKIDEEKLEKEKIKDWRVMRKLKEGKTVEYNGKFLKPEDYLVIKRGLKVAYTGDTIPCQSVIESVKGADLLIHDSTFLNEPSAFTYGHSNVADAAKVALEASVKLLALTHISPRYEDVTEHLKVARRIFPKSILPDDLSYITLK</sequence>
<evidence type="ECO:0000255" key="1">
    <source>
        <dbReference type="HAMAP-Rule" id="MF_01818"/>
    </source>
</evidence>
<organism>
    <name type="scientific">Saccharolobus islandicus (strain L.S.2.15 / Lassen #1)</name>
    <name type="common">Sulfolobus islandicus</name>
    <dbReference type="NCBI Taxonomy" id="429572"/>
    <lineage>
        <taxon>Archaea</taxon>
        <taxon>Thermoproteota</taxon>
        <taxon>Thermoprotei</taxon>
        <taxon>Sulfolobales</taxon>
        <taxon>Sulfolobaceae</taxon>
        <taxon>Saccharolobus</taxon>
    </lineage>
</organism>
<comment type="function">
    <text evidence="1">Zinc phosphodiesterase, which displays some tRNA 3'-processing endonuclease activity. Probably involved in tRNA maturation, by removing a 3'-trailer from precursor tRNA.</text>
</comment>
<comment type="catalytic activity">
    <reaction evidence="1">
        <text>Endonucleolytic cleavage of RNA, removing extra 3' nucleotides from tRNA precursor, generating 3' termini of tRNAs. A 3'-hydroxy group is left at the tRNA terminus and a 5'-phosphoryl group is left at the trailer molecule.</text>
        <dbReference type="EC" id="3.1.26.11"/>
    </reaction>
</comment>
<comment type="cofactor">
    <cofactor evidence="1">
        <name>Zn(2+)</name>
        <dbReference type="ChEBI" id="CHEBI:29105"/>
    </cofactor>
    <text evidence="1">Binds 2 Zn(2+) ions.</text>
</comment>
<comment type="subunit">
    <text evidence="1">Homodimer.</text>
</comment>
<comment type="similarity">
    <text evidence="1">Belongs to the RNase Z family.</text>
</comment>
<dbReference type="EC" id="3.1.26.11" evidence="1"/>
<dbReference type="EMBL" id="CP001399">
    <property type="protein sequence ID" value="ACP35285.1"/>
    <property type="molecule type" value="Genomic_DNA"/>
</dbReference>
<dbReference type="RefSeq" id="WP_012713613.1">
    <property type="nucleotide sequence ID" value="NC_012589.1"/>
</dbReference>
<dbReference type="SMR" id="C3MPH2"/>
<dbReference type="GeneID" id="7797786"/>
<dbReference type="KEGG" id="sis:LS215_1275"/>
<dbReference type="HOGENOM" id="CLU_031317_2_1_2"/>
<dbReference type="OrthoDB" id="85118at2157"/>
<dbReference type="Proteomes" id="UP000001747">
    <property type="component" value="Chromosome"/>
</dbReference>
<dbReference type="GO" id="GO:0042781">
    <property type="term" value="F:3'-tRNA processing endoribonuclease activity"/>
    <property type="evidence" value="ECO:0007669"/>
    <property type="project" value="UniProtKB-UniRule"/>
</dbReference>
<dbReference type="GO" id="GO:0008270">
    <property type="term" value="F:zinc ion binding"/>
    <property type="evidence" value="ECO:0007669"/>
    <property type="project" value="UniProtKB-UniRule"/>
</dbReference>
<dbReference type="CDD" id="cd07717">
    <property type="entry name" value="RNaseZ_ZiPD-like_MBL-fold"/>
    <property type="match status" value="1"/>
</dbReference>
<dbReference type="FunFam" id="3.60.15.10:FF:000075">
    <property type="entry name" value="Ribonuclease Z"/>
    <property type="match status" value="1"/>
</dbReference>
<dbReference type="Gene3D" id="3.60.15.10">
    <property type="entry name" value="Ribonuclease Z/Hydroxyacylglutathione hydrolase-like"/>
    <property type="match status" value="1"/>
</dbReference>
<dbReference type="HAMAP" id="MF_01818">
    <property type="entry name" value="RNase_Z_BN"/>
    <property type="match status" value="1"/>
</dbReference>
<dbReference type="InterPro" id="IPR001279">
    <property type="entry name" value="Metallo-B-lactamas"/>
</dbReference>
<dbReference type="InterPro" id="IPR036866">
    <property type="entry name" value="RibonucZ/Hydroxyglut_hydro"/>
</dbReference>
<dbReference type="InterPro" id="IPR013471">
    <property type="entry name" value="RNase_Z/BN"/>
</dbReference>
<dbReference type="NCBIfam" id="NF000801">
    <property type="entry name" value="PRK00055.1-3"/>
    <property type="match status" value="1"/>
</dbReference>
<dbReference type="NCBIfam" id="TIGR02651">
    <property type="entry name" value="RNase_Z"/>
    <property type="match status" value="1"/>
</dbReference>
<dbReference type="PANTHER" id="PTHR46018">
    <property type="entry name" value="ZINC PHOSPHODIESTERASE ELAC PROTEIN 1"/>
    <property type="match status" value="1"/>
</dbReference>
<dbReference type="PANTHER" id="PTHR46018:SF2">
    <property type="entry name" value="ZINC PHOSPHODIESTERASE ELAC PROTEIN 1"/>
    <property type="match status" value="1"/>
</dbReference>
<dbReference type="Pfam" id="PF00753">
    <property type="entry name" value="Lactamase_B"/>
    <property type="match status" value="1"/>
</dbReference>
<dbReference type="Pfam" id="PF12706">
    <property type="entry name" value="Lactamase_B_2"/>
    <property type="match status" value="1"/>
</dbReference>
<dbReference type="SUPFAM" id="SSF56281">
    <property type="entry name" value="Metallo-hydrolase/oxidoreductase"/>
    <property type="match status" value="1"/>
</dbReference>
<gene>
    <name evidence="1" type="primary">rnz</name>
    <name type="ordered locus">LS215_1275</name>
</gene>
<reference key="1">
    <citation type="journal article" date="2009" name="Proc. Natl. Acad. Sci. U.S.A.">
        <title>Biogeography of the Sulfolobus islandicus pan-genome.</title>
        <authorList>
            <person name="Reno M.L."/>
            <person name="Held N.L."/>
            <person name="Fields C.J."/>
            <person name="Burke P.V."/>
            <person name="Whitaker R.J."/>
        </authorList>
    </citation>
    <scope>NUCLEOTIDE SEQUENCE [LARGE SCALE GENOMIC DNA]</scope>
    <source>
        <strain>L.S.2.15 / Lassen #1</strain>
    </source>
</reference>
<accession>C3MPH2</accession>
<protein>
    <recommendedName>
        <fullName evidence="1">Ribonuclease Z</fullName>
        <shortName evidence="1">RNase Z</shortName>
        <ecNumber evidence="1">3.1.26.11</ecNumber>
    </recommendedName>
    <alternativeName>
        <fullName evidence="1">tRNA 3 endonuclease</fullName>
    </alternativeName>
    <alternativeName>
        <fullName evidence="1">tRNase Z</fullName>
    </alternativeName>
</protein>
<keyword id="KW-0255">Endonuclease</keyword>
<keyword id="KW-0378">Hydrolase</keyword>
<keyword id="KW-0479">Metal-binding</keyword>
<keyword id="KW-0540">Nuclease</keyword>
<keyword id="KW-0819">tRNA processing</keyword>
<keyword id="KW-0862">Zinc</keyword>